<evidence type="ECO:0000255" key="1">
    <source>
        <dbReference type="HAMAP-Rule" id="MF_01067"/>
    </source>
</evidence>
<gene>
    <name evidence="1" type="primary">yciC</name>
    <name type="ordered locus">ECIAI39_1592</name>
</gene>
<reference key="1">
    <citation type="journal article" date="2009" name="PLoS Genet.">
        <title>Organised genome dynamics in the Escherichia coli species results in highly diverse adaptive paths.</title>
        <authorList>
            <person name="Touchon M."/>
            <person name="Hoede C."/>
            <person name="Tenaillon O."/>
            <person name="Barbe V."/>
            <person name="Baeriswyl S."/>
            <person name="Bidet P."/>
            <person name="Bingen E."/>
            <person name="Bonacorsi S."/>
            <person name="Bouchier C."/>
            <person name="Bouvet O."/>
            <person name="Calteau A."/>
            <person name="Chiapello H."/>
            <person name="Clermont O."/>
            <person name="Cruveiller S."/>
            <person name="Danchin A."/>
            <person name="Diard M."/>
            <person name="Dossat C."/>
            <person name="Karoui M.E."/>
            <person name="Frapy E."/>
            <person name="Garry L."/>
            <person name="Ghigo J.M."/>
            <person name="Gilles A.M."/>
            <person name="Johnson J."/>
            <person name="Le Bouguenec C."/>
            <person name="Lescat M."/>
            <person name="Mangenot S."/>
            <person name="Martinez-Jehanne V."/>
            <person name="Matic I."/>
            <person name="Nassif X."/>
            <person name="Oztas S."/>
            <person name="Petit M.A."/>
            <person name="Pichon C."/>
            <person name="Rouy Z."/>
            <person name="Ruf C.S."/>
            <person name="Schneider D."/>
            <person name="Tourret J."/>
            <person name="Vacherie B."/>
            <person name="Vallenet D."/>
            <person name="Medigue C."/>
            <person name="Rocha E.P.C."/>
            <person name="Denamur E."/>
        </authorList>
    </citation>
    <scope>NUCLEOTIDE SEQUENCE [LARGE SCALE GENOMIC DNA]</scope>
    <source>
        <strain>IAI39 / ExPEC</strain>
    </source>
</reference>
<comment type="subcellular location">
    <subcellularLocation>
        <location evidence="1">Cell inner membrane</location>
        <topology evidence="1">Multi-pass membrane protein</topology>
    </subcellularLocation>
</comment>
<comment type="similarity">
    <text evidence="1">Belongs to the UPF0259 family.</text>
</comment>
<feature type="chain" id="PRO_1000136580" description="UPF0259 membrane protein YciC">
    <location>
        <begin position="1"/>
        <end position="247"/>
    </location>
</feature>
<feature type="transmembrane region" description="Helical" evidence="1">
    <location>
        <begin position="20"/>
        <end position="40"/>
    </location>
</feature>
<feature type="transmembrane region" description="Helical" evidence="1">
    <location>
        <begin position="87"/>
        <end position="107"/>
    </location>
</feature>
<feature type="transmembrane region" description="Helical" evidence="1">
    <location>
        <begin position="118"/>
        <end position="140"/>
    </location>
</feature>
<feature type="transmembrane region" description="Helical" evidence="1">
    <location>
        <begin position="152"/>
        <end position="172"/>
    </location>
</feature>
<feature type="transmembrane region" description="Helical" evidence="1">
    <location>
        <begin position="187"/>
        <end position="209"/>
    </location>
</feature>
<feature type="transmembrane region" description="Helical" evidence="1">
    <location>
        <begin position="225"/>
        <end position="245"/>
    </location>
</feature>
<keyword id="KW-0997">Cell inner membrane</keyword>
<keyword id="KW-1003">Cell membrane</keyword>
<keyword id="KW-0472">Membrane</keyword>
<keyword id="KW-0812">Transmembrane</keyword>
<keyword id="KW-1133">Transmembrane helix</keyword>
<name>YCIC_ECO7I</name>
<organism>
    <name type="scientific">Escherichia coli O7:K1 (strain IAI39 / ExPEC)</name>
    <dbReference type="NCBI Taxonomy" id="585057"/>
    <lineage>
        <taxon>Bacteria</taxon>
        <taxon>Pseudomonadati</taxon>
        <taxon>Pseudomonadota</taxon>
        <taxon>Gammaproteobacteria</taxon>
        <taxon>Enterobacterales</taxon>
        <taxon>Enterobacteriaceae</taxon>
        <taxon>Escherichia</taxon>
    </lineage>
</organism>
<dbReference type="EMBL" id="CU928164">
    <property type="protein sequence ID" value="CAR17723.1"/>
    <property type="molecule type" value="Genomic_DNA"/>
</dbReference>
<dbReference type="RefSeq" id="WP_000028546.1">
    <property type="nucleotide sequence ID" value="NC_011750.1"/>
</dbReference>
<dbReference type="RefSeq" id="YP_002407591.1">
    <property type="nucleotide sequence ID" value="NC_011750.1"/>
</dbReference>
<dbReference type="STRING" id="585057.ECIAI39_1592"/>
<dbReference type="KEGG" id="ect:ECIAI39_1592"/>
<dbReference type="PATRIC" id="fig|585057.6.peg.1662"/>
<dbReference type="HOGENOM" id="CLU_073287_0_0_6"/>
<dbReference type="Proteomes" id="UP000000749">
    <property type="component" value="Chromosome"/>
</dbReference>
<dbReference type="GO" id="GO:0005886">
    <property type="term" value="C:plasma membrane"/>
    <property type="evidence" value="ECO:0007669"/>
    <property type="project" value="UniProtKB-SubCell"/>
</dbReference>
<dbReference type="HAMAP" id="MF_01067">
    <property type="entry name" value="UPF0259"/>
    <property type="match status" value="1"/>
</dbReference>
<dbReference type="InterPro" id="IPR009627">
    <property type="entry name" value="UPF0259"/>
</dbReference>
<dbReference type="NCBIfam" id="NF002774">
    <property type="entry name" value="PRK02868.1"/>
    <property type="match status" value="1"/>
</dbReference>
<dbReference type="Pfam" id="PF06790">
    <property type="entry name" value="UPF0259"/>
    <property type="match status" value="1"/>
</dbReference>
<protein>
    <recommendedName>
        <fullName evidence="1">UPF0259 membrane protein YciC</fullName>
    </recommendedName>
</protein>
<accession>B7NVM5</accession>
<proteinExistence type="inferred from homology"/>
<sequence length="247" mass="26405">MSITAQSVYRDTGNFFRNQFMTILLVSLLCAFITVVLGHVFSPSDAQLAQLNDGVPVSGSSGLFDLVQNMSPEQQQILLQASAASTFSGLIGNAILAGGVILIIQLVSAGQRVSALRAIGASAPILPKLFILIFLTTLLVQIGIMLVVVPGIIMAILLALAPVMLVQDKMGVFASMRSSMRLTWANMRLVAPAVLSWLLAKTLLLLFASSFAALTPEIGAVLANTLSNLISAVLLIYLFRLYMLIRQ</sequence>